<name>PONK_DICDI</name>
<protein>
    <recommendedName>
        <fullName>Ponticulin-like protein K</fullName>
    </recommendedName>
</protein>
<keyword id="KW-0009">Actin-binding</keyword>
<keyword id="KW-1003">Cell membrane</keyword>
<keyword id="KW-0325">Glycoprotein</keyword>
<keyword id="KW-0336">GPI-anchor</keyword>
<keyword id="KW-0449">Lipoprotein</keyword>
<keyword id="KW-0472">Membrane</keyword>
<keyword id="KW-1185">Reference proteome</keyword>
<keyword id="KW-0732">Signal</keyword>
<sequence length="187" mass="20414">MKNLILLFLLISIINLIQSLPLDSVINFYVNSTVGSCKGKQLEVSLDVCNNGCSNSFKITSSKDNVNNYNFTSYIETDDKQCLTNNYTINLFNCSIDNAALVGPYSVKCIFKETPSPSNSSNPSPSPNTTSSSSLSSSSLNSNEPNQTTKPPKTNEPQKNNSTSNIPNFFAIFGFLVLIIFILGDKI</sequence>
<dbReference type="EMBL" id="AAFI02000003">
    <property type="protein sequence ID" value="EAS66948.1"/>
    <property type="molecule type" value="Genomic_DNA"/>
</dbReference>
<dbReference type="RefSeq" id="XP_001134486.1">
    <property type="nucleotide sequence ID" value="XM_001134486.1"/>
</dbReference>
<dbReference type="SMR" id="Q1ZXQ9"/>
<dbReference type="GlyCosmos" id="Q1ZXQ9">
    <property type="glycosylation" value="9 sites, No reported glycans"/>
</dbReference>
<dbReference type="GlyGen" id="Q1ZXQ9">
    <property type="glycosylation" value="9 sites"/>
</dbReference>
<dbReference type="PaxDb" id="44689-DDB0232303"/>
<dbReference type="EnsemblProtists" id="EAS66948">
    <property type="protein sequence ID" value="EAS66948"/>
    <property type="gene ID" value="DDB_G0268460"/>
</dbReference>
<dbReference type="GeneID" id="8616424"/>
<dbReference type="KEGG" id="ddi:DDB_G0268460"/>
<dbReference type="dictyBase" id="DDB_G0268460">
    <property type="gene designation" value="ponK"/>
</dbReference>
<dbReference type="VEuPathDB" id="AmoebaDB:DDB_G0268460"/>
<dbReference type="HOGENOM" id="CLU_1450173_0_0_1"/>
<dbReference type="InParanoid" id="Q1ZXQ9"/>
<dbReference type="PRO" id="PR:Q1ZXQ9"/>
<dbReference type="Proteomes" id="UP000002195">
    <property type="component" value="Chromosome 1"/>
</dbReference>
<dbReference type="GO" id="GO:0005886">
    <property type="term" value="C:plasma membrane"/>
    <property type="evidence" value="ECO:0007669"/>
    <property type="project" value="UniProtKB-SubCell"/>
</dbReference>
<dbReference type="GO" id="GO:0098552">
    <property type="term" value="C:side of membrane"/>
    <property type="evidence" value="ECO:0007669"/>
    <property type="project" value="UniProtKB-KW"/>
</dbReference>
<dbReference type="GO" id="GO:0003779">
    <property type="term" value="F:actin binding"/>
    <property type="evidence" value="ECO:0007669"/>
    <property type="project" value="UniProtKB-KW"/>
</dbReference>
<organism>
    <name type="scientific">Dictyostelium discoideum</name>
    <name type="common">Social amoeba</name>
    <dbReference type="NCBI Taxonomy" id="44689"/>
    <lineage>
        <taxon>Eukaryota</taxon>
        <taxon>Amoebozoa</taxon>
        <taxon>Evosea</taxon>
        <taxon>Eumycetozoa</taxon>
        <taxon>Dictyostelia</taxon>
        <taxon>Dictyosteliales</taxon>
        <taxon>Dictyosteliaceae</taxon>
        <taxon>Dictyostelium</taxon>
    </lineage>
</organism>
<proteinExistence type="inferred from homology"/>
<reference key="1">
    <citation type="journal article" date="2005" name="Nature">
        <title>The genome of the social amoeba Dictyostelium discoideum.</title>
        <authorList>
            <person name="Eichinger L."/>
            <person name="Pachebat J.A."/>
            <person name="Gloeckner G."/>
            <person name="Rajandream M.A."/>
            <person name="Sucgang R."/>
            <person name="Berriman M."/>
            <person name="Song J."/>
            <person name="Olsen R."/>
            <person name="Szafranski K."/>
            <person name="Xu Q."/>
            <person name="Tunggal B."/>
            <person name="Kummerfeld S."/>
            <person name="Madera M."/>
            <person name="Konfortov B.A."/>
            <person name="Rivero F."/>
            <person name="Bankier A.T."/>
            <person name="Lehmann R."/>
            <person name="Hamlin N."/>
            <person name="Davies R."/>
            <person name="Gaudet P."/>
            <person name="Fey P."/>
            <person name="Pilcher K."/>
            <person name="Chen G."/>
            <person name="Saunders D."/>
            <person name="Sodergren E.J."/>
            <person name="Davis P."/>
            <person name="Kerhornou A."/>
            <person name="Nie X."/>
            <person name="Hall N."/>
            <person name="Anjard C."/>
            <person name="Hemphill L."/>
            <person name="Bason N."/>
            <person name="Farbrother P."/>
            <person name="Desany B."/>
            <person name="Just E."/>
            <person name="Morio T."/>
            <person name="Rost R."/>
            <person name="Churcher C.M."/>
            <person name="Cooper J."/>
            <person name="Haydock S."/>
            <person name="van Driessche N."/>
            <person name="Cronin A."/>
            <person name="Goodhead I."/>
            <person name="Muzny D.M."/>
            <person name="Mourier T."/>
            <person name="Pain A."/>
            <person name="Lu M."/>
            <person name="Harper D."/>
            <person name="Lindsay R."/>
            <person name="Hauser H."/>
            <person name="James K.D."/>
            <person name="Quiles M."/>
            <person name="Madan Babu M."/>
            <person name="Saito T."/>
            <person name="Buchrieser C."/>
            <person name="Wardroper A."/>
            <person name="Felder M."/>
            <person name="Thangavelu M."/>
            <person name="Johnson D."/>
            <person name="Knights A."/>
            <person name="Loulseged H."/>
            <person name="Mungall K.L."/>
            <person name="Oliver K."/>
            <person name="Price C."/>
            <person name="Quail M.A."/>
            <person name="Urushihara H."/>
            <person name="Hernandez J."/>
            <person name="Rabbinowitsch E."/>
            <person name="Steffen D."/>
            <person name="Sanders M."/>
            <person name="Ma J."/>
            <person name="Kohara Y."/>
            <person name="Sharp S."/>
            <person name="Simmonds M.N."/>
            <person name="Spiegler S."/>
            <person name="Tivey A."/>
            <person name="Sugano S."/>
            <person name="White B."/>
            <person name="Walker D."/>
            <person name="Woodward J.R."/>
            <person name="Winckler T."/>
            <person name="Tanaka Y."/>
            <person name="Shaulsky G."/>
            <person name="Schleicher M."/>
            <person name="Weinstock G.M."/>
            <person name="Rosenthal A."/>
            <person name="Cox E.C."/>
            <person name="Chisholm R.L."/>
            <person name="Gibbs R.A."/>
            <person name="Loomis W.F."/>
            <person name="Platzer M."/>
            <person name="Kay R.R."/>
            <person name="Williams J.G."/>
            <person name="Dear P.H."/>
            <person name="Noegel A.A."/>
            <person name="Barrell B.G."/>
            <person name="Kuspa A."/>
        </authorList>
    </citation>
    <scope>NUCLEOTIDE SEQUENCE [LARGE SCALE GENOMIC DNA]</scope>
    <source>
        <strain>AX4</strain>
    </source>
</reference>
<reference key="2">
    <citation type="journal article" date="2008" name="Langmuir">
        <title>Minimal F-actin cytoskeletal system for planar supported phospholipid bilayers.</title>
        <authorList>
            <person name="Barfoot R.J."/>
            <person name="Sheikh K.H."/>
            <person name="Johnson B.R."/>
            <person name="Colyer J."/>
            <person name="Miles R.E."/>
            <person name="Jeuken L.J."/>
            <person name="Bushby R.J."/>
            <person name="Evans S.D."/>
        </authorList>
    </citation>
    <scope>FUNCTION</scope>
</reference>
<gene>
    <name type="primary">ponK</name>
    <name type="ORF">DDB_G0268460</name>
</gene>
<feature type="signal peptide" evidence="1">
    <location>
        <begin position="1"/>
        <end position="19"/>
    </location>
</feature>
<feature type="chain" id="PRO_0000367837" description="Ponticulin-like protein K">
    <location>
        <begin position="20"/>
        <end position="161"/>
    </location>
</feature>
<feature type="propeptide" id="PRO_0000367838" description="Removed in mature form" evidence="1">
    <location>
        <begin position="162"/>
        <end position="187"/>
    </location>
</feature>
<feature type="region of interest" description="Disordered" evidence="2">
    <location>
        <begin position="115"/>
        <end position="161"/>
    </location>
</feature>
<feature type="compositionally biased region" description="Low complexity" evidence="2">
    <location>
        <begin position="115"/>
        <end position="146"/>
    </location>
</feature>
<feature type="compositionally biased region" description="Polar residues" evidence="2">
    <location>
        <begin position="147"/>
        <end position="161"/>
    </location>
</feature>
<feature type="lipid moiety-binding region" description="GPI-like-anchor amidated asparagine" evidence="1">
    <location>
        <position position="161"/>
    </location>
</feature>
<feature type="glycosylation site" description="N-linked (GlcNAc...) asparagine" evidence="1">
    <location>
        <position position="31"/>
    </location>
</feature>
<feature type="glycosylation site" description="N-linked (GlcNAc...) asparagine" evidence="1">
    <location>
        <position position="70"/>
    </location>
</feature>
<feature type="glycosylation site" description="N-linked (GlcNAc...) asparagine" evidence="1">
    <location>
        <position position="86"/>
    </location>
</feature>
<feature type="glycosylation site" description="N-linked (GlcNAc...) asparagine" evidence="1">
    <location>
        <position position="93"/>
    </location>
</feature>
<feature type="glycosylation site" description="N-linked (GlcNAc...) asparagine" evidence="1">
    <location>
        <position position="119"/>
    </location>
</feature>
<feature type="glycosylation site" description="N-linked (GlcNAc...) asparagine" evidence="1">
    <location>
        <position position="128"/>
    </location>
</feature>
<feature type="glycosylation site" description="N-linked (GlcNAc...) asparagine" evidence="1">
    <location>
        <position position="146"/>
    </location>
</feature>
<feature type="glycosylation site" description="N-linked (GlcNAc...) asparagine" evidence="1">
    <location>
        <position position="160"/>
    </location>
</feature>
<feature type="glycosylation site" description="N-linked (GlcNAc...) asparagine" evidence="1">
    <location>
        <position position="161"/>
    </location>
</feature>
<evidence type="ECO:0000255" key="1"/>
<evidence type="ECO:0000256" key="2">
    <source>
        <dbReference type="SAM" id="MobiDB-lite"/>
    </source>
</evidence>
<evidence type="ECO:0000269" key="3">
    <source>
    </source>
</evidence>
<evidence type="ECO:0000305" key="4"/>
<comment type="function">
    <text evidence="3">Binds F-actin and nucleates actin assembly.</text>
</comment>
<comment type="subcellular location">
    <subcellularLocation>
        <location evidence="4">Cell membrane</location>
        <topology evidence="4">Lipid-anchor</topology>
        <topology evidence="4">GPI-anchor</topology>
    </subcellularLocation>
</comment>
<comment type="PTM">
    <text evidence="4">The GPI-like-anchor contains a phosphoceramide group, rather than a phosphatidyl group.</text>
</comment>
<comment type="similarity">
    <text evidence="4">Belongs to the ponticulin family.</text>
</comment>
<comment type="caution">
    <text evidence="4">The Dictyosteliida are known to produce a glycosylsphingolipidinositol anchor (GPI-like-anchor). It has not been established whether Dictyosteliida make a glycosylphosphatidylinositol anchor (GPI-anchor) also, and whether their GPI-like-anchor modifications can be interconverted with GPI-anchor modifications in a resculpting process. It has not been established that the GPI-like-anchor modification in Dictyosteliida utilizes the same sequence motif.</text>
</comment>
<comment type="caution">
    <text evidence="4">Different sequence motifs predict both the N-glycosylation modification and the GPI- or GPI-like anchor modification for Asn-161. While it is chemically possible for both modifications to occur, it is not known whether it is enzymatically possible.</text>
</comment>
<accession>Q1ZXQ9</accession>